<comment type="function">
    <text evidence="1">Catalyzes the prenylation of para-hydroxybenzoate (PHB) with an all-trans polyprenyl group. Mediates the second step in the final reaction sequence of ubiquinone-8 (UQ-8) biosynthesis, which is the condensation of the polyisoprenoid side chain with PHB, generating the first membrane-bound Q intermediate 3-octaprenyl-4-hydroxybenzoate.</text>
</comment>
<comment type="catalytic activity">
    <reaction evidence="1">
        <text>all-trans-octaprenyl diphosphate + 4-hydroxybenzoate = 4-hydroxy-3-(all-trans-octaprenyl)benzoate + diphosphate</text>
        <dbReference type="Rhea" id="RHEA:27782"/>
        <dbReference type="ChEBI" id="CHEBI:1617"/>
        <dbReference type="ChEBI" id="CHEBI:17879"/>
        <dbReference type="ChEBI" id="CHEBI:33019"/>
        <dbReference type="ChEBI" id="CHEBI:57711"/>
        <dbReference type="EC" id="2.5.1.39"/>
    </reaction>
</comment>
<comment type="cofactor">
    <cofactor evidence="1">
        <name>Mg(2+)</name>
        <dbReference type="ChEBI" id="CHEBI:18420"/>
    </cofactor>
</comment>
<comment type="pathway">
    <text evidence="1">Cofactor biosynthesis; ubiquinone biosynthesis.</text>
</comment>
<comment type="subcellular location">
    <subcellularLocation>
        <location evidence="1">Cell inner membrane</location>
        <topology evidence="1">Multi-pass membrane protein</topology>
    </subcellularLocation>
</comment>
<comment type="similarity">
    <text evidence="1">Belongs to the UbiA prenyltransferase family.</text>
</comment>
<name>UBIA_SALTI</name>
<feature type="chain" id="PRO_0000262835" description="4-hydroxybenzoate octaprenyltransferase">
    <location>
        <begin position="1"/>
        <end position="290"/>
    </location>
</feature>
<feature type="transmembrane region" description="Helical" evidence="1">
    <location>
        <begin position="23"/>
        <end position="43"/>
    </location>
</feature>
<feature type="transmembrane region" description="Helical" evidence="1">
    <location>
        <begin position="46"/>
        <end position="66"/>
    </location>
</feature>
<feature type="transmembrane region" description="Helical" evidence="1">
    <location>
        <begin position="99"/>
        <end position="119"/>
    </location>
</feature>
<feature type="transmembrane region" description="Helical" evidence="1">
    <location>
        <begin position="141"/>
        <end position="161"/>
    </location>
</feature>
<feature type="transmembrane region" description="Helical" evidence="1">
    <location>
        <begin position="163"/>
        <end position="183"/>
    </location>
</feature>
<feature type="transmembrane region" description="Helical" evidence="1">
    <location>
        <begin position="212"/>
        <end position="232"/>
    </location>
</feature>
<feature type="transmembrane region" description="Helical" evidence="1">
    <location>
        <begin position="233"/>
        <end position="253"/>
    </location>
</feature>
<feature type="transmembrane region" description="Helical" evidence="1">
    <location>
        <begin position="268"/>
        <end position="288"/>
    </location>
</feature>
<organism>
    <name type="scientific">Salmonella typhi</name>
    <dbReference type="NCBI Taxonomy" id="90370"/>
    <lineage>
        <taxon>Bacteria</taxon>
        <taxon>Pseudomonadati</taxon>
        <taxon>Pseudomonadota</taxon>
        <taxon>Gammaproteobacteria</taxon>
        <taxon>Enterobacterales</taxon>
        <taxon>Enterobacteriaceae</taxon>
        <taxon>Salmonella</taxon>
    </lineage>
</organism>
<proteinExistence type="inferred from homology"/>
<reference key="1">
    <citation type="journal article" date="2003" name="J. Bacteriol.">
        <title>Comparative genomics of Salmonella enterica serovar Typhi strains Ty2 and CT18.</title>
        <authorList>
            <person name="Deng W."/>
            <person name="Liou S.-R."/>
            <person name="Plunkett G. III"/>
            <person name="Mayhew G.F."/>
            <person name="Rose D.J."/>
            <person name="Burland V."/>
            <person name="Kodoyianni V."/>
            <person name="Schwartz D.C."/>
            <person name="Blattner F.R."/>
        </authorList>
    </citation>
    <scope>NUCLEOTIDE SEQUENCE [LARGE SCALE GENOMIC DNA]</scope>
    <source>
        <strain>ATCC 700931 / Ty2</strain>
    </source>
</reference>
<reference key="2">
    <citation type="journal article" date="2001" name="Nature">
        <title>Complete genome sequence of a multiple drug resistant Salmonella enterica serovar Typhi CT18.</title>
        <authorList>
            <person name="Parkhill J."/>
            <person name="Dougan G."/>
            <person name="James K.D."/>
            <person name="Thomson N.R."/>
            <person name="Pickard D."/>
            <person name="Wain J."/>
            <person name="Churcher C.M."/>
            <person name="Mungall K.L."/>
            <person name="Bentley S.D."/>
            <person name="Holden M.T.G."/>
            <person name="Sebaihia M."/>
            <person name="Baker S."/>
            <person name="Basham D."/>
            <person name="Brooks K."/>
            <person name="Chillingworth T."/>
            <person name="Connerton P."/>
            <person name="Cronin A."/>
            <person name="Davis P."/>
            <person name="Davies R.M."/>
            <person name="Dowd L."/>
            <person name="White N."/>
            <person name="Farrar J."/>
            <person name="Feltwell T."/>
            <person name="Hamlin N."/>
            <person name="Haque A."/>
            <person name="Hien T.T."/>
            <person name="Holroyd S."/>
            <person name="Jagels K."/>
            <person name="Krogh A."/>
            <person name="Larsen T.S."/>
            <person name="Leather S."/>
            <person name="Moule S."/>
            <person name="O'Gaora P."/>
            <person name="Parry C."/>
            <person name="Quail M.A."/>
            <person name="Rutherford K.M."/>
            <person name="Simmonds M."/>
            <person name="Skelton J."/>
            <person name="Stevens K."/>
            <person name="Whitehead S."/>
            <person name="Barrell B.G."/>
        </authorList>
    </citation>
    <scope>NUCLEOTIDE SEQUENCE [LARGE SCALE GENOMIC DNA]</scope>
    <source>
        <strain>CT18</strain>
    </source>
</reference>
<dbReference type="EC" id="2.5.1.39" evidence="1"/>
<dbReference type="EMBL" id="AE014613">
    <property type="protein sequence ID" value="AAO71604.1"/>
    <property type="molecule type" value="Genomic_DNA"/>
</dbReference>
<dbReference type="EMBL" id="AL513382">
    <property type="protein sequence ID" value="CAD09218.1"/>
    <property type="molecule type" value="Genomic_DNA"/>
</dbReference>
<dbReference type="RefSeq" id="NP_458532.1">
    <property type="nucleotide sequence ID" value="NC_003198.1"/>
</dbReference>
<dbReference type="RefSeq" id="WP_000455249.1">
    <property type="nucleotide sequence ID" value="NZ_WSUR01000027.1"/>
</dbReference>
<dbReference type="SMR" id="Q8XGZ7"/>
<dbReference type="STRING" id="220341.gene:17588262"/>
<dbReference type="KEGG" id="stt:t4140"/>
<dbReference type="KEGG" id="sty:STY4430"/>
<dbReference type="PATRIC" id="fig|220341.7.peg.4530"/>
<dbReference type="eggNOG" id="COG0382">
    <property type="taxonomic scope" value="Bacteria"/>
</dbReference>
<dbReference type="HOGENOM" id="CLU_034879_1_0_6"/>
<dbReference type="OMA" id="KFEHTIF"/>
<dbReference type="OrthoDB" id="9782418at2"/>
<dbReference type="UniPathway" id="UPA00232"/>
<dbReference type="Proteomes" id="UP000000541">
    <property type="component" value="Chromosome"/>
</dbReference>
<dbReference type="Proteomes" id="UP000002670">
    <property type="component" value="Chromosome"/>
</dbReference>
<dbReference type="GO" id="GO:0005886">
    <property type="term" value="C:plasma membrane"/>
    <property type="evidence" value="ECO:0007669"/>
    <property type="project" value="UniProtKB-SubCell"/>
</dbReference>
<dbReference type="GO" id="GO:0008412">
    <property type="term" value="F:4-hydroxybenzoate polyprenyltransferase activity"/>
    <property type="evidence" value="ECO:0007669"/>
    <property type="project" value="UniProtKB-UniRule"/>
</dbReference>
<dbReference type="GO" id="GO:0006744">
    <property type="term" value="P:ubiquinone biosynthetic process"/>
    <property type="evidence" value="ECO:0007669"/>
    <property type="project" value="UniProtKB-UniRule"/>
</dbReference>
<dbReference type="CDD" id="cd13959">
    <property type="entry name" value="PT_UbiA_COQ2"/>
    <property type="match status" value="1"/>
</dbReference>
<dbReference type="FunFam" id="1.10.357.140:FF:000002">
    <property type="entry name" value="4-hydroxybenzoate octaprenyltransferase"/>
    <property type="match status" value="1"/>
</dbReference>
<dbReference type="FunFam" id="1.20.120.1780:FF:000001">
    <property type="entry name" value="4-hydroxybenzoate octaprenyltransferase"/>
    <property type="match status" value="1"/>
</dbReference>
<dbReference type="Gene3D" id="1.10.357.140">
    <property type="entry name" value="UbiA prenyltransferase"/>
    <property type="match status" value="1"/>
</dbReference>
<dbReference type="Gene3D" id="1.20.120.1780">
    <property type="entry name" value="UbiA prenyltransferase"/>
    <property type="match status" value="1"/>
</dbReference>
<dbReference type="HAMAP" id="MF_01635">
    <property type="entry name" value="UbiA"/>
    <property type="match status" value="1"/>
</dbReference>
<dbReference type="InterPro" id="IPR006370">
    <property type="entry name" value="HB_polyprenyltransferase-like"/>
</dbReference>
<dbReference type="InterPro" id="IPR039653">
    <property type="entry name" value="Prenyltransferase"/>
</dbReference>
<dbReference type="InterPro" id="IPR000537">
    <property type="entry name" value="UbiA_prenyltransferase"/>
</dbReference>
<dbReference type="InterPro" id="IPR030470">
    <property type="entry name" value="UbiA_prenylTrfase_CS"/>
</dbReference>
<dbReference type="InterPro" id="IPR044878">
    <property type="entry name" value="UbiA_sf"/>
</dbReference>
<dbReference type="NCBIfam" id="TIGR01474">
    <property type="entry name" value="ubiA_proteo"/>
    <property type="match status" value="1"/>
</dbReference>
<dbReference type="PANTHER" id="PTHR11048:SF28">
    <property type="entry name" value="4-HYDROXYBENZOATE POLYPRENYLTRANSFERASE, MITOCHONDRIAL"/>
    <property type="match status" value="1"/>
</dbReference>
<dbReference type="PANTHER" id="PTHR11048">
    <property type="entry name" value="PRENYLTRANSFERASES"/>
    <property type="match status" value="1"/>
</dbReference>
<dbReference type="Pfam" id="PF01040">
    <property type="entry name" value="UbiA"/>
    <property type="match status" value="1"/>
</dbReference>
<dbReference type="PROSITE" id="PS00943">
    <property type="entry name" value="UBIA"/>
    <property type="match status" value="1"/>
</dbReference>
<keyword id="KW-0997">Cell inner membrane</keyword>
<keyword id="KW-1003">Cell membrane</keyword>
<keyword id="KW-0460">Magnesium</keyword>
<keyword id="KW-0472">Membrane</keyword>
<keyword id="KW-0808">Transferase</keyword>
<keyword id="KW-0812">Transmembrane</keyword>
<keyword id="KW-1133">Transmembrane helix</keyword>
<keyword id="KW-0831">Ubiquinone biosynthesis</keyword>
<evidence type="ECO:0000255" key="1">
    <source>
        <dbReference type="HAMAP-Rule" id="MF_01635"/>
    </source>
</evidence>
<sequence length="290" mass="32602">MEWSLTQSKLLAFHRLMRTDKPIGALLLLWPTLWALWVATPGMPQLWILAVFVAGVWLMRAAGCVVNDYADRKFDGHVKRTVNRPLPSGAVTEKEARNLFVVLVLLAFLLVLTLNAMTILLSVAALALAWVYPFMKRYTHLPQVVLGAAFGWSIPMAFAAVSESLPLSCWLMFLANILWAVAYDTQYAMVDRDDDIKIGIKSTAILFGRYDTLIIGILQLGVMALMALIGWLNGLGWGYYWAVLVAGALFVYQQKLIANREREACFKAFMNNNYVGLVLFLGLAMSYWHF</sequence>
<protein>
    <recommendedName>
        <fullName evidence="1">4-hydroxybenzoate octaprenyltransferase</fullName>
        <ecNumber evidence="1">2.5.1.39</ecNumber>
    </recommendedName>
    <alternativeName>
        <fullName evidence="1">4-HB polyprenyltransferase</fullName>
    </alternativeName>
</protein>
<gene>
    <name evidence="1" type="primary">ubiA</name>
    <name type="ordered locus">STY4430</name>
    <name type="ordered locus">t4140</name>
</gene>
<accession>Q8XGZ7</accession>
<accession>Q7ALT9</accession>